<name>KHPA_LEPIC</name>
<proteinExistence type="inferred from homology"/>
<dbReference type="EMBL" id="AE016823">
    <property type="protein sequence ID" value="AAS70152.1"/>
    <property type="molecule type" value="Genomic_DNA"/>
</dbReference>
<dbReference type="RefSeq" id="WP_000391865.1">
    <property type="nucleotide sequence ID" value="NC_005823.1"/>
</dbReference>
<dbReference type="SMR" id="Q72S30"/>
<dbReference type="KEGG" id="lic:LIC_11556"/>
<dbReference type="HOGENOM" id="CLU_132074_1_0_12"/>
<dbReference type="Proteomes" id="UP000007037">
    <property type="component" value="Chromosome I"/>
</dbReference>
<dbReference type="GO" id="GO:0005737">
    <property type="term" value="C:cytoplasm"/>
    <property type="evidence" value="ECO:0007669"/>
    <property type="project" value="UniProtKB-SubCell"/>
</dbReference>
<dbReference type="GO" id="GO:0003723">
    <property type="term" value="F:RNA binding"/>
    <property type="evidence" value="ECO:0007669"/>
    <property type="project" value="UniProtKB-UniRule"/>
</dbReference>
<dbReference type="GO" id="GO:0071555">
    <property type="term" value="P:cell wall organization"/>
    <property type="evidence" value="ECO:0007669"/>
    <property type="project" value="UniProtKB-KW"/>
</dbReference>
<dbReference type="GO" id="GO:0009252">
    <property type="term" value="P:peptidoglycan biosynthetic process"/>
    <property type="evidence" value="ECO:0007669"/>
    <property type="project" value="UniProtKB-UniRule"/>
</dbReference>
<dbReference type="GO" id="GO:0008360">
    <property type="term" value="P:regulation of cell shape"/>
    <property type="evidence" value="ECO:0007669"/>
    <property type="project" value="UniProtKB-KW"/>
</dbReference>
<dbReference type="CDD" id="cd22533">
    <property type="entry name" value="KH-II_YlqC-like"/>
    <property type="match status" value="1"/>
</dbReference>
<dbReference type="Gene3D" id="3.30.300.20">
    <property type="match status" value="1"/>
</dbReference>
<dbReference type="HAMAP" id="MF_00088">
    <property type="entry name" value="KhpA"/>
    <property type="match status" value="1"/>
</dbReference>
<dbReference type="InterPro" id="IPR015946">
    <property type="entry name" value="KH_dom-like_a/b"/>
</dbReference>
<dbReference type="InterPro" id="IPR009019">
    <property type="entry name" value="KH_sf_prok-type"/>
</dbReference>
<dbReference type="InterPro" id="IPR020627">
    <property type="entry name" value="KhpA"/>
</dbReference>
<dbReference type="PANTHER" id="PTHR34654:SF1">
    <property type="entry name" value="RNA-BINDING PROTEIN KHPA"/>
    <property type="match status" value="1"/>
</dbReference>
<dbReference type="PANTHER" id="PTHR34654">
    <property type="entry name" value="UPF0109 PROTEIN SCO5592"/>
    <property type="match status" value="1"/>
</dbReference>
<dbReference type="Pfam" id="PF13083">
    <property type="entry name" value="KH_KhpA-B"/>
    <property type="match status" value="1"/>
</dbReference>
<dbReference type="SUPFAM" id="SSF54814">
    <property type="entry name" value="Prokaryotic type KH domain (KH-domain type II)"/>
    <property type="match status" value="1"/>
</dbReference>
<dbReference type="PROSITE" id="PS50084">
    <property type="entry name" value="KH_TYPE_1"/>
    <property type="match status" value="1"/>
</dbReference>
<organism>
    <name type="scientific">Leptospira interrogans serogroup Icterohaemorrhagiae serovar copenhageni (strain Fiocruz L1-130)</name>
    <dbReference type="NCBI Taxonomy" id="267671"/>
    <lineage>
        <taxon>Bacteria</taxon>
        <taxon>Pseudomonadati</taxon>
        <taxon>Spirochaetota</taxon>
        <taxon>Spirochaetia</taxon>
        <taxon>Leptospirales</taxon>
        <taxon>Leptospiraceae</taxon>
        <taxon>Leptospira</taxon>
    </lineage>
</organism>
<gene>
    <name evidence="1" type="primary">khpA</name>
    <name type="ordered locus">LIC_11556</name>
</gene>
<protein>
    <recommendedName>
        <fullName evidence="1">RNA-binding protein KhpA</fullName>
    </recommendedName>
    <alternativeName>
        <fullName evidence="1">KH-domain protein A</fullName>
    </alternativeName>
</protein>
<comment type="function">
    <text evidence="1">A probable RNA chaperone. Forms a complex with KhpB which binds to cellular RNA and controls its expression. Plays a role in peptidoglycan (PG) homeostasis and cell length regulation.</text>
</comment>
<comment type="subunit">
    <text evidence="1">Forms a complex with KhpB.</text>
</comment>
<comment type="subcellular location">
    <subcellularLocation>
        <location evidence="1">Cytoplasm</location>
    </subcellularLocation>
</comment>
<comment type="similarity">
    <text evidence="1">Belongs to the KhpA RNA-binding protein family.</text>
</comment>
<keyword id="KW-0133">Cell shape</keyword>
<keyword id="KW-0961">Cell wall biogenesis/degradation</keyword>
<keyword id="KW-0143">Chaperone</keyword>
<keyword id="KW-0963">Cytoplasm</keyword>
<keyword id="KW-0694">RNA-binding</keyword>
<feature type="chain" id="PRO_0000163225" description="RNA-binding protein KhpA">
    <location>
        <begin position="1"/>
        <end position="76"/>
    </location>
</feature>
<feature type="domain" description="KH" evidence="1">
    <location>
        <begin position="29"/>
        <end position="76"/>
    </location>
</feature>
<evidence type="ECO:0000255" key="1">
    <source>
        <dbReference type="HAMAP-Rule" id="MF_00088"/>
    </source>
</evidence>
<sequence length="76" mass="8423">MEELLKYIVASLVEFPEEIVIREIEGEEQNIIELRVSPKDVGKVIGKNGRIAKSLRAILTAASVKAGKNFSLEIID</sequence>
<accession>Q72S30</accession>
<reference key="1">
    <citation type="journal article" date="2004" name="J. Bacteriol.">
        <title>Comparative genomics of two Leptospira interrogans serovars reveals novel insights into physiology and pathogenesis.</title>
        <authorList>
            <person name="Nascimento A.L.T.O."/>
            <person name="Ko A.I."/>
            <person name="Martins E.A.L."/>
            <person name="Monteiro-Vitorello C.B."/>
            <person name="Ho P.L."/>
            <person name="Haake D.A."/>
            <person name="Verjovski-Almeida S."/>
            <person name="Hartskeerl R.A."/>
            <person name="Marques M.V."/>
            <person name="Oliveira M.C."/>
            <person name="Menck C.F.M."/>
            <person name="Leite L.C.C."/>
            <person name="Carrer H."/>
            <person name="Coutinho L.L."/>
            <person name="Degrave W.M."/>
            <person name="Dellagostin O.A."/>
            <person name="El-Dorry H."/>
            <person name="Ferro E.S."/>
            <person name="Ferro M.I.T."/>
            <person name="Furlan L.R."/>
            <person name="Gamberini M."/>
            <person name="Giglioti E.A."/>
            <person name="Goes-Neto A."/>
            <person name="Goldman G.H."/>
            <person name="Goldman M.H.S."/>
            <person name="Harakava R."/>
            <person name="Jeronimo S.M.B."/>
            <person name="Junqueira-de-Azevedo I.L.M."/>
            <person name="Kimura E.T."/>
            <person name="Kuramae E.E."/>
            <person name="Lemos E.G.M."/>
            <person name="Lemos M.V.F."/>
            <person name="Marino C.L."/>
            <person name="Nunes L.R."/>
            <person name="de Oliveira R.C."/>
            <person name="Pereira G.G."/>
            <person name="Reis M.S."/>
            <person name="Schriefer A."/>
            <person name="Siqueira W.J."/>
            <person name="Sommer P."/>
            <person name="Tsai S.M."/>
            <person name="Simpson A.J.G."/>
            <person name="Ferro J.A."/>
            <person name="Camargo L.E.A."/>
            <person name="Kitajima J.P."/>
            <person name="Setubal J.C."/>
            <person name="Van Sluys M.A."/>
        </authorList>
    </citation>
    <scope>NUCLEOTIDE SEQUENCE [LARGE SCALE GENOMIC DNA]</scope>
    <source>
        <strain>Fiocruz L1-130</strain>
    </source>
</reference>